<name>DIUX_CAMFO</name>
<accession>E2AZE8</accession>
<evidence type="ECO:0000250" key="1">
    <source>
        <dbReference type="UniProtKB" id="P85826"/>
    </source>
</evidence>
<evidence type="ECO:0000255" key="2"/>
<evidence type="ECO:0000269" key="3">
    <source>
    </source>
</evidence>
<evidence type="ECO:0000303" key="4">
    <source>
    </source>
</evidence>
<evidence type="ECO:0000305" key="5"/>
<evidence type="ECO:0000305" key="6">
    <source>
    </source>
</evidence>
<evidence type="ECO:0000312" key="7">
    <source>
        <dbReference type="EMBL" id="EFN61187.1"/>
    </source>
</evidence>
<gene>
    <name evidence="7" type="ORF">EAG_12746</name>
</gene>
<feature type="signal peptide" evidence="2">
    <location>
        <begin position="1"/>
        <end position="23"/>
    </location>
</feature>
<feature type="propeptide" id="PRO_0000434209" evidence="6">
    <location>
        <begin position="24"/>
        <end position="63"/>
    </location>
</feature>
<feature type="peptide" id="PRO_0000434210" description="Diuretic hormone class 2" evidence="3">
    <location>
        <begin position="66"/>
        <end position="96"/>
    </location>
</feature>
<feature type="propeptide" id="PRO_0000434211" evidence="6">
    <location>
        <begin position="101"/>
        <end position="105"/>
    </location>
</feature>
<feature type="modified residue" description="Proline amide" evidence="3">
    <location>
        <position position="96"/>
    </location>
</feature>
<sequence length="105" mass="11640">MTVLCTLMAFVMVVAISSLTVDAIPHSHESYWDQQDDIDRDEFLELLSRLSRTVMNRPEMENSKRGLDLGLSRGFSGSQAAKHLMGLAAANYAGGPGRRRRSEQA</sequence>
<proteinExistence type="evidence at protein level"/>
<keyword id="KW-0027">Amidation</keyword>
<keyword id="KW-0165">Cleavage on pair of basic residues</keyword>
<keyword id="KW-0903">Direct protein sequencing</keyword>
<keyword id="KW-0372">Hormone</keyword>
<keyword id="KW-1185">Reference proteome</keyword>
<keyword id="KW-0964">Secreted</keyword>
<keyword id="KW-0732">Signal</keyword>
<organism>
    <name type="scientific">Camponotus floridanus</name>
    <name type="common">Florida carpenter ant</name>
    <dbReference type="NCBI Taxonomy" id="104421"/>
    <lineage>
        <taxon>Eukaryota</taxon>
        <taxon>Metazoa</taxon>
        <taxon>Ecdysozoa</taxon>
        <taxon>Arthropoda</taxon>
        <taxon>Hexapoda</taxon>
        <taxon>Insecta</taxon>
        <taxon>Pterygota</taxon>
        <taxon>Neoptera</taxon>
        <taxon>Endopterygota</taxon>
        <taxon>Hymenoptera</taxon>
        <taxon>Apocrita</taxon>
        <taxon>Aculeata</taxon>
        <taxon>Formicoidea</taxon>
        <taxon>Formicidae</taxon>
        <taxon>Formicinae</taxon>
        <taxon>Camponotus</taxon>
    </lineage>
</organism>
<protein>
    <recommendedName>
        <fullName evidence="7">Diuretic hormone class 2</fullName>
    </recommendedName>
    <alternativeName>
        <fullName evidence="4">DH(31)</fullName>
    </alternativeName>
    <alternativeName>
        <fullName evidence="1">Diuretic peptide</fullName>
        <shortName evidence="1">DP</shortName>
    </alternativeName>
</protein>
<dbReference type="EMBL" id="GL444207">
    <property type="protein sequence ID" value="EFN61187.1"/>
    <property type="status" value="ALT_SEQ"/>
    <property type="molecule type" value="Genomic_DNA"/>
</dbReference>
<dbReference type="STRING" id="104421.E2AZE8"/>
<dbReference type="EnsemblMetazoa" id="XM_011268441.3">
    <property type="protein sequence ID" value="XP_011266743.1"/>
    <property type="gene ID" value="LOC105257660"/>
</dbReference>
<dbReference type="OrthoDB" id="6495587at2759"/>
<dbReference type="Proteomes" id="UP000000311">
    <property type="component" value="Unassembled WGS sequence"/>
</dbReference>
<dbReference type="GO" id="GO:0005615">
    <property type="term" value="C:extracellular space"/>
    <property type="evidence" value="ECO:0007669"/>
    <property type="project" value="TreeGrafter"/>
</dbReference>
<dbReference type="GO" id="GO:0008613">
    <property type="term" value="F:diuretic hormone activity"/>
    <property type="evidence" value="ECO:0007669"/>
    <property type="project" value="InterPro"/>
</dbReference>
<dbReference type="GO" id="GO:0001664">
    <property type="term" value="F:G protein-coupled receptor binding"/>
    <property type="evidence" value="ECO:0007669"/>
    <property type="project" value="TreeGrafter"/>
</dbReference>
<dbReference type="GO" id="GO:0007589">
    <property type="term" value="P:body fluid secretion"/>
    <property type="evidence" value="ECO:0007669"/>
    <property type="project" value="InterPro"/>
</dbReference>
<dbReference type="InterPro" id="IPR034439">
    <property type="entry name" value="DH2-like"/>
</dbReference>
<dbReference type="PANTHER" id="PTHR41146">
    <property type="entry name" value="DIURETIC HORMONE CLASS 2"/>
    <property type="match status" value="1"/>
</dbReference>
<dbReference type="PANTHER" id="PTHR41146:SF1">
    <property type="entry name" value="DIURETIC HORMONE CLASS 2"/>
    <property type="match status" value="1"/>
</dbReference>
<reference key="1">
    <citation type="journal article" date="2010" name="Science">
        <title>Genomic comparison of the ants Camponotus floridanus and Harpegnathos saltator.</title>
        <authorList>
            <person name="Bonasio R."/>
            <person name="Zhang G."/>
            <person name="Ye C."/>
            <person name="Mutti N.S."/>
            <person name="Fang X."/>
            <person name="Qin N."/>
            <person name="Donahue G."/>
            <person name="Yang P."/>
            <person name="Li Q."/>
            <person name="Li C."/>
            <person name="Zhang P."/>
            <person name="Huang Z."/>
            <person name="Berger S.L."/>
            <person name="Reinberg D."/>
            <person name="Wang J."/>
            <person name="Liebig J."/>
        </authorList>
    </citation>
    <scope>NUCLEOTIDE SEQUENCE [LARGE SCALE GENOMIC DNA]</scope>
</reference>
<reference evidence="5" key="2">
    <citation type="journal article" date="2015" name="J. Proteome Res.">
        <title>Neuropeptidomics of the carpenter ant Camponotus floridanus.</title>
        <authorList>
            <person name="Schmitt F."/>
            <person name="Vanselow J.T."/>
            <person name="Schlosser A."/>
            <person name="Kahnt J."/>
            <person name="Roessler W."/>
            <person name="Wegener C."/>
        </authorList>
    </citation>
    <scope>PROTEIN SEQUENCE OF 66-96</scope>
    <scope>TISSUE SPECIFICITY</scope>
    <scope>MASS SPECTROMETRY</scope>
    <scope>IDENTIFICATION BY MASS SPECTROMETRY</scope>
    <scope>AMIDATION AT PRO-96</scope>
</reference>
<comment type="function">
    <text evidence="1">Regulation of fluid secretion. Stimulates Malpighian tubules fluid secretion.</text>
</comment>
<comment type="subcellular location">
    <subcellularLocation>
        <location evidence="6">Secreted</location>
    </subcellularLocation>
</comment>
<comment type="tissue specificity">
    <text evidence="3">Expressed in central brain, antennal lobes, retrocerebral complex and gnathal, thoracic and abdominal ganglia but not in optical lobes (at protein level).</text>
</comment>
<comment type="mass spectrometry" mass="2986.53" method="MALDI" evidence="3"/>
<comment type="similarity">
    <text evidence="5">Belongs to the diuretic hormone class 2 family.</text>
</comment>
<comment type="sequence caution" evidence="6">
    <conflict type="erroneous gene model prediction">
        <sequence resource="EMBL-CDS" id="EFN61187"/>
    </conflict>
</comment>